<comment type="function">
    <text evidence="1">This protein is one of the two subunits of integration host factor, a specific DNA-binding protein that functions in genetic recombination as well as in transcriptional and translational control.</text>
</comment>
<comment type="subunit">
    <text evidence="1">Heterodimer of an alpha and a beta chain.</text>
</comment>
<comment type="similarity">
    <text evidence="1">Belongs to the bacterial histone-like protein family.</text>
</comment>
<protein>
    <recommendedName>
        <fullName evidence="1">Integration host factor subunit beta</fullName>
        <shortName evidence="1">IHF-beta</shortName>
    </recommendedName>
</protein>
<proteinExistence type="inferred from homology"/>
<evidence type="ECO:0000255" key="1">
    <source>
        <dbReference type="HAMAP-Rule" id="MF_00381"/>
    </source>
</evidence>
<dbReference type="EMBL" id="CP000513">
    <property type="protein sequence ID" value="ABQ13284.1"/>
    <property type="molecule type" value="Genomic_DNA"/>
</dbReference>
<dbReference type="RefSeq" id="WP_011927865.1">
    <property type="nucleotide sequence ID" value="NC_009446.1"/>
</dbReference>
<dbReference type="SMR" id="A5EWQ2"/>
<dbReference type="STRING" id="246195.DNO_0114"/>
<dbReference type="KEGG" id="dno:DNO_0114"/>
<dbReference type="eggNOG" id="COG0776">
    <property type="taxonomic scope" value="Bacteria"/>
</dbReference>
<dbReference type="HOGENOM" id="CLU_105066_2_0_6"/>
<dbReference type="OrthoDB" id="9804203at2"/>
<dbReference type="Proteomes" id="UP000000248">
    <property type="component" value="Chromosome"/>
</dbReference>
<dbReference type="GO" id="GO:0005694">
    <property type="term" value="C:chromosome"/>
    <property type="evidence" value="ECO:0007669"/>
    <property type="project" value="InterPro"/>
</dbReference>
<dbReference type="GO" id="GO:0005829">
    <property type="term" value="C:cytosol"/>
    <property type="evidence" value="ECO:0007669"/>
    <property type="project" value="TreeGrafter"/>
</dbReference>
<dbReference type="GO" id="GO:0003677">
    <property type="term" value="F:DNA binding"/>
    <property type="evidence" value="ECO:0007669"/>
    <property type="project" value="UniProtKB-UniRule"/>
</dbReference>
<dbReference type="GO" id="GO:0030527">
    <property type="term" value="F:structural constituent of chromatin"/>
    <property type="evidence" value="ECO:0007669"/>
    <property type="project" value="InterPro"/>
</dbReference>
<dbReference type="GO" id="GO:0006310">
    <property type="term" value="P:DNA recombination"/>
    <property type="evidence" value="ECO:0007669"/>
    <property type="project" value="UniProtKB-UniRule"/>
</dbReference>
<dbReference type="GO" id="GO:0006355">
    <property type="term" value="P:regulation of DNA-templated transcription"/>
    <property type="evidence" value="ECO:0007669"/>
    <property type="project" value="UniProtKB-UniRule"/>
</dbReference>
<dbReference type="GO" id="GO:0006417">
    <property type="term" value="P:regulation of translation"/>
    <property type="evidence" value="ECO:0007669"/>
    <property type="project" value="UniProtKB-UniRule"/>
</dbReference>
<dbReference type="CDD" id="cd13836">
    <property type="entry name" value="IHF_B"/>
    <property type="match status" value="1"/>
</dbReference>
<dbReference type="Gene3D" id="4.10.520.10">
    <property type="entry name" value="IHF-like DNA-binding proteins"/>
    <property type="match status" value="1"/>
</dbReference>
<dbReference type="HAMAP" id="MF_00381">
    <property type="entry name" value="IHF_beta"/>
    <property type="match status" value="1"/>
</dbReference>
<dbReference type="InterPro" id="IPR000119">
    <property type="entry name" value="Hist_DNA-bd"/>
</dbReference>
<dbReference type="InterPro" id="IPR020816">
    <property type="entry name" value="Histone-like_DNA-bd_CS"/>
</dbReference>
<dbReference type="InterPro" id="IPR010992">
    <property type="entry name" value="IHF-like_DNA-bd_dom_sf"/>
</dbReference>
<dbReference type="InterPro" id="IPR005685">
    <property type="entry name" value="IHF_beta"/>
</dbReference>
<dbReference type="NCBIfam" id="TIGR00988">
    <property type="entry name" value="hip"/>
    <property type="match status" value="1"/>
</dbReference>
<dbReference type="NCBIfam" id="NF001222">
    <property type="entry name" value="PRK00199.1"/>
    <property type="match status" value="1"/>
</dbReference>
<dbReference type="PANTHER" id="PTHR33175">
    <property type="entry name" value="DNA-BINDING PROTEIN HU"/>
    <property type="match status" value="1"/>
</dbReference>
<dbReference type="PANTHER" id="PTHR33175:SF5">
    <property type="entry name" value="INTEGRATION HOST FACTOR SUBUNIT BETA"/>
    <property type="match status" value="1"/>
</dbReference>
<dbReference type="Pfam" id="PF00216">
    <property type="entry name" value="Bac_DNA_binding"/>
    <property type="match status" value="1"/>
</dbReference>
<dbReference type="PRINTS" id="PR01727">
    <property type="entry name" value="DNABINDINGHU"/>
</dbReference>
<dbReference type="SMART" id="SM00411">
    <property type="entry name" value="BHL"/>
    <property type="match status" value="1"/>
</dbReference>
<dbReference type="SUPFAM" id="SSF47729">
    <property type="entry name" value="IHF-like DNA-binding proteins"/>
    <property type="match status" value="1"/>
</dbReference>
<dbReference type="PROSITE" id="PS00045">
    <property type="entry name" value="HISTONE_LIKE"/>
    <property type="match status" value="1"/>
</dbReference>
<reference key="1">
    <citation type="journal article" date="2007" name="Nat. Biotechnol.">
        <title>Genome sequence and identification of candidate vaccine antigens from the animal pathogen Dichelobacter nodosus.</title>
        <authorList>
            <person name="Myers G.S.A."/>
            <person name="Parker D."/>
            <person name="Al-Hasani K."/>
            <person name="Kennan R.M."/>
            <person name="Seemann T."/>
            <person name="Ren Q."/>
            <person name="Badger J.H."/>
            <person name="Selengut J.D."/>
            <person name="Deboy R.T."/>
            <person name="Tettelin H."/>
            <person name="Boyce J.D."/>
            <person name="McCarl V.P."/>
            <person name="Han X."/>
            <person name="Nelson W.C."/>
            <person name="Madupu R."/>
            <person name="Mohamoud Y."/>
            <person name="Holley T."/>
            <person name="Fedorova N."/>
            <person name="Khouri H."/>
            <person name="Bottomley S.P."/>
            <person name="Whittington R.J."/>
            <person name="Adler B."/>
            <person name="Songer J.G."/>
            <person name="Rood J.I."/>
            <person name="Paulsen I.T."/>
        </authorList>
    </citation>
    <scope>NUCLEOTIDE SEQUENCE [LARGE SCALE GENOMIC DNA]</scope>
    <source>
        <strain>VCS1703A</strain>
    </source>
</reference>
<name>IHFB_DICNV</name>
<accession>A5EWQ2</accession>
<organism>
    <name type="scientific">Dichelobacter nodosus (strain VCS1703A)</name>
    <dbReference type="NCBI Taxonomy" id="246195"/>
    <lineage>
        <taxon>Bacteria</taxon>
        <taxon>Pseudomonadati</taxon>
        <taxon>Pseudomonadota</taxon>
        <taxon>Gammaproteobacteria</taxon>
        <taxon>Cardiobacteriales</taxon>
        <taxon>Cardiobacteriaceae</taxon>
        <taxon>Dichelobacter</taxon>
    </lineage>
</organism>
<feature type="chain" id="PRO_1000060598" description="Integration host factor subunit beta">
    <location>
        <begin position="1"/>
        <end position="96"/>
    </location>
</feature>
<sequence length="96" mass="11278">MTKSELIERLVMKYPQLRAQDVEDTVKLMIERICHTLEKGDRVEIRGFGSFSLHYRESRQGRNPKTGESVRVPAKSIPYFRAGKELRERVDEEINQ</sequence>
<keyword id="KW-0233">DNA recombination</keyword>
<keyword id="KW-0238">DNA-binding</keyword>
<keyword id="KW-1185">Reference proteome</keyword>
<keyword id="KW-0804">Transcription</keyword>
<keyword id="KW-0805">Transcription regulation</keyword>
<keyword id="KW-0810">Translation regulation</keyword>
<gene>
    <name evidence="1" type="primary">ihfB</name>
    <name evidence="1" type="synonym">himD</name>
    <name type="ordered locus">DNO_0114</name>
</gene>